<evidence type="ECO:0000255" key="1">
    <source>
        <dbReference type="HAMAP-Rule" id="MF_00104"/>
    </source>
</evidence>
<keyword id="KW-0963">Cytoplasm</keyword>
<keyword id="KW-0255">Endonuclease</keyword>
<keyword id="KW-0378">Hydrolase</keyword>
<keyword id="KW-0460">Magnesium</keyword>
<keyword id="KW-0479">Metal-binding</keyword>
<keyword id="KW-0507">mRNA processing</keyword>
<keyword id="KW-0540">Nuclease</keyword>
<keyword id="KW-0694">RNA-binding</keyword>
<keyword id="KW-0698">rRNA processing</keyword>
<keyword id="KW-0699">rRNA-binding</keyword>
<keyword id="KW-0819">tRNA processing</keyword>
<organism>
    <name type="scientific">Helicobacter pylori (strain J99 / ATCC 700824)</name>
    <name type="common">Campylobacter pylori J99</name>
    <dbReference type="NCBI Taxonomy" id="85963"/>
    <lineage>
        <taxon>Bacteria</taxon>
        <taxon>Pseudomonadati</taxon>
        <taxon>Campylobacterota</taxon>
        <taxon>Epsilonproteobacteria</taxon>
        <taxon>Campylobacterales</taxon>
        <taxon>Helicobacteraceae</taxon>
        <taxon>Helicobacter</taxon>
    </lineage>
</organism>
<gene>
    <name evidence="1" type="primary">rnc</name>
    <name type="ordered locus">jhp_0607</name>
</gene>
<proteinExistence type="inferred from homology"/>
<accession>Q9ZLH2</accession>
<feature type="chain" id="PRO_0000180402" description="Ribonuclease 3">
    <location>
        <begin position="1"/>
        <end position="239"/>
    </location>
</feature>
<feature type="domain" description="RNase III" evidence="1">
    <location>
        <begin position="18"/>
        <end position="141"/>
    </location>
</feature>
<feature type="domain" description="DRBM" evidence="1">
    <location>
        <begin position="168"/>
        <end position="237"/>
    </location>
</feature>
<feature type="active site" evidence="1">
    <location>
        <position position="58"/>
    </location>
</feature>
<feature type="active site" evidence="1">
    <location>
        <position position="130"/>
    </location>
</feature>
<feature type="binding site" evidence="1">
    <location>
        <position position="54"/>
    </location>
    <ligand>
        <name>Mg(2+)</name>
        <dbReference type="ChEBI" id="CHEBI:18420"/>
    </ligand>
</feature>
<feature type="binding site" evidence="1">
    <location>
        <position position="127"/>
    </location>
    <ligand>
        <name>Mg(2+)</name>
        <dbReference type="ChEBI" id="CHEBI:18420"/>
    </ligand>
</feature>
<feature type="binding site" evidence="1">
    <location>
        <position position="130"/>
    </location>
    <ligand>
        <name>Mg(2+)</name>
        <dbReference type="ChEBI" id="CHEBI:18420"/>
    </ligand>
</feature>
<name>RNC_HELPJ</name>
<reference key="1">
    <citation type="journal article" date="1999" name="Nature">
        <title>Genomic sequence comparison of two unrelated isolates of the human gastric pathogen Helicobacter pylori.</title>
        <authorList>
            <person name="Alm R.A."/>
            <person name="Ling L.-S.L."/>
            <person name="Moir D.T."/>
            <person name="King B.L."/>
            <person name="Brown E.D."/>
            <person name="Doig P.C."/>
            <person name="Smith D.R."/>
            <person name="Noonan B."/>
            <person name="Guild B.C."/>
            <person name="deJonge B.L."/>
            <person name="Carmel G."/>
            <person name="Tummino P.J."/>
            <person name="Caruso A."/>
            <person name="Uria-Nickelsen M."/>
            <person name="Mills D.M."/>
            <person name="Ives C."/>
            <person name="Gibson R."/>
            <person name="Merberg D."/>
            <person name="Mills S.D."/>
            <person name="Jiang Q."/>
            <person name="Taylor D.E."/>
            <person name="Vovis G.F."/>
            <person name="Trust T.J."/>
        </authorList>
    </citation>
    <scope>NUCLEOTIDE SEQUENCE [LARGE SCALE GENOMIC DNA]</scope>
    <source>
        <strain>J99 / ATCC 700824</strain>
    </source>
</reference>
<protein>
    <recommendedName>
        <fullName evidence="1">Ribonuclease 3</fullName>
        <ecNumber evidence="1">3.1.26.3</ecNumber>
    </recommendedName>
    <alternativeName>
        <fullName evidence="1">Ribonuclease III</fullName>
        <shortName evidence="1">RNase III</shortName>
    </alternativeName>
</protein>
<dbReference type="EC" id="3.1.26.3" evidence="1"/>
<dbReference type="EMBL" id="AE001439">
    <property type="protein sequence ID" value="AAD06188.1"/>
    <property type="molecule type" value="Genomic_DNA"/>
</dbReference>
<dbReference type="PIR" id="E71911">
    <property type="entry name" value="E71911"/>
</dbReference>
<dbReference type="RefSeq" id="WP_001889758.1">
    <property type="nucleotide sequence ID" value="NC_000921.1"/>
</dbReference>
<dbReference type="SMR" id="Q9ZLH2"/>
<dbReference type="KEGG" id="hpj:jhp_0607"/>
<dbReference type="PATRIC" id="fig|85963.30.peg.378"/>
<dbReference type="eggNOG" id="COG0571">
    <property type="taxonomic scope" value="Bacteria"/>
</dbReference>
<dbReference type="Proteomes" id="UP000000804">
    <property type="component" value="Chromosome"/>
</dbReference>
<dbReference type="GO" id="GO:0005737">
    <property type="term" value="C:cytoplasm"/>
    <property type="evidence" value="ECO:0007669"/>
    <property type="project" value="UniProtKB-SubCell"/>
</dbReference>
<dbReference type="GO" id="GO:0003725">
    <property type="term" value="F:double-stranded RNA binding"/>
    <property type="evidence" value="ECO:0007669"/>
    <property type="project" value="TreeGrafter"/>
</dbReference>
<dbReference type="GO" id="GO:0046872">
    <property type="term" value="F:metal ion binding"/>
    <property type="evidence" value="ECO:0007669"/>
    <property type="project" value="UniProtKB-KW"/>
</dbReference>
<dbReference type="GO" id="GO:0004525">
    <property type="term" value="F:ribonuclease III activity"/>
    <property type="evidence" value="ECO:0007669"/>
    <property type="project" value="UniProtKB-UniRule"/>
</dbReference>
<dbReference type="GO" id="GO:0019843">
    <property type="term" value="F:rRNA binding"/>
    <property type="evidence" value="ECO:0007669"/>
    <property type="project" value="UniProtKB-KW"/>
</dbReference>
<dbReference type="GO" id="GO:0006397">
    <property type="term" value="P:mRNA processing"/>
    <property type="evidence" value="ECO:0007669"/>
    <property type="project" value="UniProtKB-UniRule"/>
</dbReference>
<dbReference type="GO" id="GO:0010468">
    <property type="term" value="P:regulation of gene expression"/>
    <property type="evidence" value="ECO:0007669"/>
    <property type="project" value="TreeGrafter"/>
</dbReference>
<dbReference type="GO" id="GO:0006364">
    <property type="term" value="P:rRNA processing"/>
    <property type="evidence" value="ECO:0007669"/>
    <property type="project" value="UniProtKB-UniRule"/>
</dbReference>
<dbReference type="GO" id="GO:0008033">
    <property type="term" value="P:tRNA processing"/>
    <property type="evidence" value="ECO:0007669"/>
    <property type="project" value="UniProtKB-KW"/>
</dbReference>
<dbReference type="CDD" id="cd10845">
    <property type="entry name" value="DSRM_RNAse_III_family"/>
    <property type="match status" value="1"/>
</dbReference>
<dbReference type="CDD" id="cd00593">
    <property type="entry name" value="RIBOc"/>
    <property type="match status" value="1"/>
</dbReference>
<dbReference type="FunFam" id="1.10.1520.10:FF:000001">
    <property type="entry name" value="Ribonuclease 3"/>
    <property type="match status" value="1"/>
</dbReference>
<dbReference type="FunFam" id="3.30.160.20:FF:000003">
    <property type="entry name" value="Ribonuclease 3"/>
    <property type="match status" value="1"/>
</dbReference>
<dbReference type="Gene3D" id="3.30.160.20">
    <property type="match status" value="1"/>
</dbReference>
<dbReference type="Gene3D" id="1.10.1520.10">
    <property type="entry name" value="Ribonuclease III domain"/>
    <property type="match status" value="1"/>
</dbReference>
<dbReference type="HAMAP" id="MF_00104">
    <property type="entry name" value="RNase_III"/>
    <property type="match status" value="1"/>
</dbReference>
<dbReference type="InterPro" id="IPR014720">
    <property type="entry name" value="dsRBD_dom"/>
</dbReference>
<dbReference type="InterPro" id="IPR011907">
    <property type="entry name" value="RNase_III"/>
</dbReference>
<dbReference type="InterPro" id="IPR000999">
    <property type="entry name" value="RNase_III_dom"/>
</dbReference>
<dbReference type="InterPro" id="IPR036389">
    <property type="entry name" value="RNase_III_sf"/>
</dbReference>
<dbReference type="NCBIfam" id="TIGR02191">
    <property type="entry name" value="RNaseIII"/>
    <property type="match status" value="1"/>
</dbReference>
<dbReference type="PANTHER" id="PTHR11207:SF0">
    <property type="entry name" value="RIBONUCLEASE 3"/>
    <property type="match status" value="1"/>
</dbReference>
<dbReference type="PANTHER" id="PTHR11207">
    <property type="entry name" value="RIBONUCLEASE III"/>
    <property type="match status" value="1"/>
</dbReference>
<dbReference type="Pfam" id="PF00035">
    <property type="entry name" value="dsrm"/>
    <property type="match status" value="1"/>
</dbReference>
<dbReference type="Pfam" id="PF14622">
    <property type="entry name" value="Ribonucleas_3_3"/>
    <property type="match status" value="1"/>
</dbReference>
<dbReference type="SMART" id="SM00358">
    <property type="entry name" value="DSRM"/>
    <property type="match status" value="1"/>
</dbReference>
<dbReference type="SMART" id="SM00535">
    <property type="entry name" value="RIBOc"/>
    <property type="match status" value="1"/>
</dbReference>
<dbReference type="SUPFAM" id="SSF54768">
    <property type="entry name" value="dsRNA-binding domain-like"/>
    <property type="match status" value="1"/>
</dbReference>
<dbReference type="SUPFAM" id="SSF69065">
    <property type="entry name" value="RNase III domain-like"/>
    <property type="match status" value="1"/>
</dbReference>
<dbReference type="PROSITE" id="PS50137">
    <property type="entry name" value="DS_RBD"/>
    <property type="match status" value="1"/>
</dbReference>
<dbReference type="PROSITE" id="PS00517">
    <property type="entry name" value="RNASE_3_1"/>
    <property type="match status" value="1"/>
</dbReference>
<dbReference type="PROSITE" id="PS50142">
    <property type="entry name" value="RNASE_3_2"/>
    <property type="match status" value="1"/>
</dbReference>
<comment type="function">
    <text evidence="1">Digests double-stranded RNA. Involved in the processing of primary rRNA transcript to yield the immediate precursors to the large and small rRNAs (23S and 16S). Processes some mRNAs, and tRNAs when they are encoded in the rRNA operon. Processes pre-crRNA and tracrRNA of type II CRISPR loci if present in the organism.</text>
</comment>
<comment type="catalytic activity">
    <reaction evidence="1">
        <text>Endonucleolytic cleavage to 5'-phosphomonoester.</text>
        <dbReference type="EC" id="3.1.26.3"/>
    </reaction>
</comment>
<comment type="cofactor">
    <cofactor evidence="1">
        <name>Mg(2+)</name>
        <dbReference type="ChEBI" id="CHEBI:18420"/>
    </cofactor>
</comment>
<comment type="subunit">
    <text evidence="1">Homodimer.</text>
</comment>
<comment type="subcellular location">
    <subcellularLocation>
        <location evidence="1">Cytoplasm</location>
    </subcellularLocation>
</comment>
<comment type="similarity">
    <text evidence="1">Belongs to the ribonuclease III family.</text>
</comment>
<sequence>MKNKRSQNSPYVTPDNPYLTLEKALGYSFKDKRLLEQALTHKSCKLALNNERLEFLGDAVLGLVIGELLYHKFYQYDEGKLSKLRASIVSAHGFTKLAKAIALQDYLRVSSSEEISKGREKPSILSSAFEALMAGVYLEAGLAKVRKIIQNLLNRAYKRLDLEHLFMDYKTALQELTQAQFCVIPTYQLLQEKGPDHHKEFEMALYIQDKMYATAKGKSKKEAEQQCAYQALQKLKEAK</sequence>